<protein>
    <recommendedName>
        <fullName>Phospholipase A2 homolog PLA2-03</fullName>
        <shortName>svPLA2 homolog</shortName>
    </recommendedName>
</protein>
<evidence type="ECO:0000250" key="1"/>
<evidence type="ECO:0000250" key="2">
    <source>
        <dbReference type="UniProtKB" id="I6L8L6"/>
    </source>
</evidence>
<evidence type="ECO:0000250" key="3">
    <source>
        <dbReference type="UniProtKB" id="P24605"/>
    </source>
</evidence>
<evidence type="ECO:0000250" key="4">
    <source>
        <dbReference type="UniProtKB" id="Q90249"/>
    </source>
</evidence>
<evidence type="ECO:0000305" key="5"/>
<evidence type="ECO:0000305" key="6">
    <source>
    </source>
</evidence>
<sequence>MRTLWIVAVLLVGVEGSLIQLGEMIFQEMGKGAAKKYGLYGCNCGMGRRGRPQDATDRCCSVHKCCYKKLTDCDPKTDRYSYSWENGDIVCGGDDPCTKEVCECDKAATICFRDNLDTYDKKYKIFPKFLCKKPEPC</sequence>
<proteinExistence type="evidence at transcript level"/>
<feature type="signal peptide" evidence="1">
    <location>
        <begin position="1"/>
        <end position="16"/>
    </location>
</feature>
<feature type="chain" id="PRO_0000022967" description="Phospholipase A2 homolog PLA2-03">
    <location>
        <begin position="17"/>
        <end position="137"/>
    </location>
</feature>
<feature type="region of interest" description="Important for membrane-damaging activities in eukaryotes and bacteria; heparin-binding" evidence="3">
    <location>
        <begin position="121"/>
        <end position="133"/>
    </location>
</feature>
<feature type="site" description="Important residue of the cationic membrane-docking site (MDoS)" evidence="2">
    <location>
        <position position="121"/>
    </location>
</feature>
<feature type="site" description="Important residue of the cationic membrane-docking site (MDoS)" evidence="2">
    <location>
        <position position="124"/>
    </location>
</feature>
<feature type="site" description="Cationic membrane-docking site (MDoS)" evidence="2">
    <location>
        <position position="128"/>
    </location>
</feature>
<feature type="site" description="Hydrophobic membrane-disruption site (MDiS)" evidence="2">
    <location>
        <position position="130"/>
    </location>
</feature>
<feature type="site" description="Cationic membrane-docking site (MDoS)" evidence="2">
    <location>
        <position position="133"/>
    </location>
</feature>
<feature type="disulfide bond" evidence="4">
    <location>
        <begin position="42"/>
        <end position="131"/>
    </location>
</feature>
<feature type="disulfide bond" evidence="4">
    <location>
        <begin position="44"/>
        <end position="60"/>
    </location>
</feature>
<feature type="disulfide bond" evidence="4">
    <location>
        <begin position="59"/>
        <end position="111"/>
    </location>
</feature>
<feature type="disulfide bond" evidence="4">
    <location>
        <begin position="65"/>
        <end position="137"/>
    </location>
</feature>
<feature type="disulfide bond" evidence="4">
    <location>
        <begin position="66"/>
        <end position="104"/>
    </location>
</feature>
<feature type="disulfide bond" evidence="4">
    <location>
        <begin position="73"/>
        <end position="97"/>
    </location>
</feature>
<feature type="disulfide bond" evidence="4">
    <location>
        <begin position="91"/>
        <end position="102"/>
    </location>
</feature>
<keyword id="KW-1015">Disulfide bond</keyword>
<keyword id="KW-0959">Myotoxin</keyword>
<keyword id="KW-0964">Secreted</keyword>
<keyword id="KW-0732">Signal</keyword>
<keyword id="KW-0800">Toxin</keyword>
<dbReference type="EMBL" id="D49389">
    <property type="protein sequence ID" value="BAA08384.1"/>
    <property type="molecule type" value="mRNA"/>
</dbReference>
<dbReference type="PIR" id="JC4877">
    <property type="entry name" value="JC4877"/>
</dbReference>
<dbReference type="SMR" id="Q92152"/>
<dbReference type="GO" id="GO:0005576">
    <property type="term" value="C:extracellular region"/>
    <property type="evidence" value="ECO:0007669"/>
    <property type="project" value="UniProtKB-SubCell"/>
</dbReference>
<dbReference type="GO" id="GO:0005509">
    <property type="term" value="F:calcium ion binding"/>
    <property type="evidence" value="ECO:0007669"/>
    <property type="project" value="InterPro"/>
</dbReference>
<dbReference type="GO" id="GO:0047498">
    <property type="term" value="F:calcium-dependent phospholipase A2 activity"/>
    <property type="evidence" value="ECO:0007669"/>
    <property type="project" value="TreeGrafter"/>
</dbReference>
<dbReference type="GO" id="GO:0005543">
    <property type="term" value="F:phospholipid binding"/>
    <property type="evidence" value="ECO:0007669"/>
    <property type="project" value="TreeGrafter"/>
</dbReference>
<dbReference type="GO" id="GO:0090729">
    <property type="term" value="F:toxin activity"/>
    <property type="evidence" value="ECO:0007669"/>
    <property type="project" value="UniProtKB-KW"/>
</dbReference>
<dbReference type="GO" id="GO:0050482">
    <property type="term" value="P:arachidonate secretion"/>
    <property type="evidence" value="ECO:0007669"/>
    <property type="project" value="InterPro"/>
</dbReference>
<dbReference type="GO" id="GO:0016042">
    <property type="term" value="P:lipid catabolic process"/>
    <property type="evidence" value="ECO:0007669"/>
    <property type="project" value="InterPro"/>
</dbReference>
<dbReference type="GO" id="GO:0042130">
    <property type="term" value="P:negative regulation of T cell proliferation"/>
    <property type="evidence" value="ECO:0007669"/>
    <property type="project" value="TreeGrafter"/>
</dbReference>
<dbReference type="GO" id="GO:0006644">
    <property type="term" value="P:phospholipid metabolic process"/>
    <property type="evidence" value="ECO:0007669"/>
    <property type="project" value="InterPro"/>
</dbReference>
<dbReference type="CDD" id="cd00125">
    <property type="entry name" value="PLA2c"/>
    <property type="match status" value="1"/>
</dbReference>
<dbReference type="FunFam" id="1.20.90.10:FF:000001">
    <property type="entry name" value="Basic phospholipase A2 homolog"/>
    <property type="match status" value="1"/>
</dbReference>
<dbReference type="Gene3D" id="1.20.90.10">
    <property type="entry name" value="Phospholipase A2 domain"/>
    <property type="match status" value="1"/>
</dbReference>
<dbReference type="InterPro" id="IPR001211">
    <property type="entry name" value="PLipase_A2"/>
</dbReference>
<dbReference type="InterPro" id="IPR033112">
    <property type="entry name" value="PLipase_A2_Asp_AS"/>
</dbReference>
<dbReference type="InterPro" id="IPR016090">
    <property type="entry name" value="PLipase_A2_dom"/>
</dbReference>
<dbReference type="InterPro" id="IPR036444">
    <property type="entry name" value="PLipase_A2_dom_sf"/>
</dbReference>
<dbReference type="InterPro" id="IPR033113">
    <property type="entry name" value="PLipase_A2_His_AS"/>
</dbReference>
<dbReference type="PANTHER" id="PTHR11716">
    <property type="entry name" value="PHOSPHOLIPASE A2 FAMILY MEMBER"/>
    <property type="match status" value="1"/>
</dbReference>
<dbReference type="PANTHER" id="PTHR11716:SF9">
    <property type="entry name" value="PHOSPHOLIPASE A2, MEMBRANE ASSOCIATED"/>
    <property type="match status" value="1"/>
</dbReference>
<dbReference type="Pfam" id="PF00068">
    <property type="entry name" value="Phospholip_A2_1"/>
    <property type="match status" value="1"/>
</dbReference>
<dbReference type="PRINTS" id="PR00389">
    <property type="entry name" value="PHPHLIPASEA2"/>
</dbReference>
<dbReference type="SMART" id="SM00085">
    <property type="entry name" value="PA2c"/>
    <property type="match status" value="1"/>
</dbReference>
<dbReference type="SUPFAM" id="SSF48619">
    <property type="entry name" value="Phospholipase A2, PLA2"/>
    <property type="match status" value="1"/>
</dbReference>
<dbReference type="PROSITE" id="PS00119">
    <property type="entry name" value="PA2_ASP"/>
    <property type="match status" value="1"/>
</dbReference>
<dbReference type="PROSITE" id="PS00118">
    <property type="entry name" value="PA2_HIS"/>
    <property type="match status" value="1"/>
</dbReference>
<name>PA2H_OVOOK</name>
<organism>
    <name type="scientific">Ovophis okinavensis</name>
    <name type="common">Ryukyu Island pit viper</name>
    <name type="synonym">Trimeresurus okinavensis</name>
    <dbReference type="NCBI Taxonomy" id="8769"/>
    <lineage>
        <taxon>Eukaryota</taxon>
        <taxon>Metazoa</taxon>
        <taxon>Chordata</taxon>
        <taxon>Craniata</taxon>
        <taxon>Vertebrata</taxon>
        <taxon>Euteleostomi</taxon>
        <taxon>Lepidosauria</taxon>
        <taxon>Squamata</taxon>
        <taxon>Bifurcata</taxon>
        <taxon>Unidentata</taxon>
        <taxon>Episquamata</taxon>
        <taxon>Toxicofera</taxon>
        <taxon>Serpentes</taxon>
        <taxon>Colubroidea</taxon>
        <taxon>Viperidae</taxon>
        <taxon>Crotalinae</taxon>
        <taxon>Ovophis</taxon>
    </lineage>
</organism>
<comment type="function">
    <text evidence="2">Snake venom phospholipase A2 homolog that lacks enzymatic activity (By similarity). Is myotoxic and displays edema-inducing activities in mouse paw (By similarity). A model of myotoxic mechanism has been proposed: an apo Lys49-PLA2 is activated by the entrance of a hydrophobic molecule (e.g. fatty acid) at the hydrophobic channel of the protein leading to a reorientation of a monomer (By similarity). This reorientation causes a transition between 'inactive' to 'active' states, causing alignment of C-terminal and membrane-docking sites (MDoS) side-by-side and putting the membrane-disruption sites (MDiS) in the same plane, exposed to solvent and in a symmetric position for both monomers (By similarity). The MDoS region stabilizes the toxin on membrane by the interaction of charged residues with phospholipid head groups (By similarity). Subsequently, the MDiS region destabilizes the membrane with penetration of hydrophobic residues (By similarity). This insertion causes a disorganization of the membrane, allowing an uncontrolled influx of ions (i.e. calcium and sodium), and eventually triggering irreversible intracellular alterations and cell death (By similarity).</text>
</comment>
<comment type="subcellular location">
    <subcellularLocation>
        <location evidence="6">Secreted</location>
    </subcellularLocation>
</comment>
<comment type="tissue specificity">
    <text evidence="6">Expressed by the venom gland.</text>
</comment>
<comment type="similarity">
    <text evidence="5">Belongs to the phospholipase A2 family. Group II subfamily. K49 sub-subfamily.</text>
</comment>
<comment type="caution">
    <text evidence="5">Does not bind calcium as one of the calcium-binding sites is lost (Asp-&gt;Lys in position 64, which corresponds to 'Lys-49' in the current nomenclature).</text>
</comment>
<accession>Q92152</accession>
<reference key="1">
    <citation type="journal article" date="1996" name="Gene">
        <title>Accelerated evolution of Trimeresurus okinavensis venom gland phospholipase A2 isozyme-encoding genes.</title>
        <authorList>
            <person name="Nobuhisa I."/>
            <person name="Nakashima K."/>
            <person name="Deshimaru M."/>
            <person name="Ogawa T."/>
            <person name="Shimohigashi Y."/>
            <person name="Fukumaki Y."/>
            <person name="Sakaki Y."/>
            <person name="Hattori S."/>
            <person name="Kihara H."/>
            <person name="Ohno M."/>
        </authorList>
    </citation>
    <scope>NUCLEOTIDE SEQUENCE [MRNA]</scope>
    <source>
        <tissue>Venom gland</tissue>
    </source>
</reference>